<protein>
    <recommendedName>
        <fullName evidence="1">UDP-N-acetylglucosamine 1-carboxyvinyltransferase</fullName>
        <ecNumber evidence="1">2.5.1.7</ecNumber>
    </recommendedName>
    <alternativeName>
        <fullName evidence="1">Enoylpyruvate transferase</fullName>
    </alternativeName>
    <alternativeName>
        <fullName evidence="1">UDP-N-acetylglucosamine enolpyruvyl transferase</fullName>
        <shortName evidence="1">EPT</shortName>
    </alternativeName>
</protein>
<organism>
    <name type="scientific">Methylobacterium sp. (strain 4-46)</name>
    <dbReference type="NCBI Taxonomy" id="426117"/>
    <lineage>
        <taxon>Bacteria</taxon>
        <taxon>Pseudomonadati</taxon>
        <taxon>Pseudomonadota</taxon>
        <taxon>Alphaproteobacteria</taxon>
        <taxon>Hyphomicrobiales</taxon>
        <taxon>Methylobacteriaceae</taxon>
        <taxon>Methylobacterium</taxon>
    </lineage>
</organism>
<dbReference type="EC" id="2.5.1.7" evidence="1"/>
<dbReference type="EMBL" id="CP000943">
    <property type="protein sequence ID" value="ACA17080.1"/>
    <property type="molecule type" value="Genomic_DNA"/>
</dbReference>
<dbReference type="RefSeq" id="WP_012332486.1">
    <property type="nucleotide sequence ID" value="NC_010511.1"/>
</dbReference>
<dbReference type="SMR" id="B0UL80"/>
<dbReference type="STRING" id="426117.M446_2641"/>
<dbReference type="KEGG" id="met:M446_2641"/>
<dbReference type="eggNOG" id="COG0766">
    <property type="taxonomic scope" value="Bacteria"/>
</dbReference>
<dbReference type="HOGENOM" id="CLU_027387_0_0_5"/>
<dbReference type="UniPathway" id="UPA00219"/>
<dbReference type="GO" id="GO:0005737">
    <property type="term" value="C:cytoplasm"/>
    <property type="evidence" value="ECO:0007669"/>
    <property type="project" value="UniProtKB-SubCell"/>
</dbReference>
<dbReference type="GO" id="GO:0008760">
    <property type="term" value="F:UDP-N-acetylglucosamine 1-carboxyvinyltransferase activity"/>
    <property type="evidence" value="ECO:0007669"/>
    <property type="project" value="UniProtKB-UniRule"/>
</dbReference>
<dbReference type="GO" id="GO:0051301">
    <property type="term" value="P:cell division"/>
    <property type="evidence" value="ECO:0007669"/>
    <property type="project" value="UniProtKB-KW"/>
</dbReference>
<dbReference type="GO" id="GO:0071555">
    <property type="term" value="P:cell wall organization"/>
    <property type="evidence" value="ECO:0007669"/>
    <property type="project" value="UniProtKB-KW"/>
</dbReference>
<dbReference type="GO" id="GO:0009252">
    <property type="term" value="P:peptidoglycan biosynthetic process"/>
    <property type="evidence" value="ECO:0007669"/>
    <property type="project" value="UniProtKB-UniRule"/>
</dbReference>
<dbReference type="GO" id="GO:0008360">
    <property type="term" value="P:regulation of cell shape"/>
    <property type="evidence" value="ECO:0007669"/>
    <property type="project" value="UniProtKB-KW"/>
</dbReference>
<dbReference type="GO" id="GO:0019277">
    <property type="term" value="P:UDP-N-acetylgalactosamine biosynthetic process"/>
    <property type="evidence" value="ECO:0007669"/>
    <property type="project" value="InterPro"/>
</dbReference>
<dbReference type="CDD" id="cd01555">
    <property type="entry name" value="UdpNAET"/>
    <property type="match status" value="1"/>
</dbReference>
<dbReference type="FunFam" id="3.65.10.10:FF:000001">
    <property type="entry name" value="UDP-N-acetylglucosamine 1-carboxyvinyltransferase"/>
    <property type="match status" value="1"/>
</dbReference>
<dbReference type="Gene3D" id="3.65.10.10">
    <property type="entry name" value="Enolpyruvate transferase domain"/>
    <property type="match status" value="2"/>
</dbReference>
<dbReference type="HAMAP" id="MF_00111">
    <property type="entry name" value="MurA"/>
    <property type="match status" value="1"/>
</dbReference>
<dbReference type="InterPro" id="IPR001986">
    <property type="entry name" value="Enolpyruvate_Tfrase_dom"/>
</dbReference>
<dbReference type="InterPro" id="IPR036968">
    <property type="entry name" value="Enolpyruvate_Tfrase_sf"/>
</dbReference>
<dbReference type="InterPro" id="IPR050068">
    <property type="entry name" value="MurA_subfamily"/>
</dbReference>
<dbReference type="InterPro" id="IPR013792">
    <property type="entry name" value="RNA3'P_cycl/enolpyr_Trfase_a/b"/>
</dbReference>
<dbReference type="InterPro" id="IPR005750">
    <property type="entry name" value="UDP_GlcNAc_COvinyl_MurA"/>
</dbReference>
<dbReference type="NCBIfam" id="TIGR01072">
    <property type="entry name" value="murA"/>
    <property type="match status" value="1"/>
</dbReference>
<dbReference type="NCBIfam" id="NF006873">
    <property type="entry name" value="PRK09369.1"/>
    <property type="match status" value="1"/>
</dbReference>
<dbReference type="PANTHER" id="PTHR43783">
    <property type="entry name" value="UDP-N-ACETYLGLUCOSAMINE 1-CARBOXYVINYLTRANSFERASE"/>
    <property type="match status" value="1"/>
</dbReference>
<dbReference type="PANTHER" id="PTHR43783:SF1">
    <property type="entry name" value="UDP-N-ACETYLGLUCOSAMINE 1-CARBOXYVINYLTRANSFERASE"/>
    <property type="match status" value="1"/>
</dbReference>
<dbReference type="Pfam" id="PF00275">
    <property type="entry name" value="EPSP_synthase"/>
    <property type="match status" value="1"/>
</dbReference>
<dbReference type="SUPFAM" id="SSF55205">
    <property type="entry name" value="EPT/RTPC-like"/>
    <property type="match status" value="1"/>
</dbReference>
<evidence type="ECO:0000255" key="1">
    <source>
        <dbReference type="HAMAP-Rule" id="MF_00111"/>
    </source>
</evidence>
<comment type="function">
    <text evidence="1">Cell wall formation. Adds enolpyruvyl to UDP-N-acetylglucosamine.</text>
</comment>
<comment type="catalytic activity">
    <reaction evidence="1">
        <text>phosphoenolpyruvate + UDP-N-acetyl-alpha-D-glucosamine = UDP-N-acetyl-3-O-(1-carboxyvinyl)-alpha-D-glucosamine + phosphate</text>
        <dbReference type="Rhea" id="RHEA:18681"/>
        <dbReference type="ChEBI" id="CHEBI:43474"/>
        <dbReference type="ChEBI" id="CHEBI:57705"/>
        <dbReference type="ChEBI" id="CHEBI:58702"/>
        <dbReference type="ChEBI" id="CHEBI:68483"/>
        <dbReference type="EC" id="2.5.1.7"/>
    </reaction>
</comment>
<comment type="pathway">
    <text evidence="1">Cell wall biogenesis; peptidoglycan biosynthesis.</text>
</comment>
<comment type="subcellular location">
    <subcellularLocation>
        <location evidence="1">Cytoplasm</location>
    </subcellularLocation>
</comment>
<comment type="similarity">
    <text evidence="1">Belongs to the EPSP synthase family. MurA subfamily.</text>
</comment>
<gene>
    <name evidence="1" type="primary">murA</name>
    <name type="ordered locus">M446_2641</name>
</gene>
<name>MURA_METS4</name>
<keyword id="KW-0131">Cell cycle</keyword>
<keyword id="KW-0132">Cell division</keyword>
<keyword id="KW-0133">Cell shape</keyword>
<keyword id="KW-0961">Cell wall biogenesis/degradation</keyword>
<keyword id="KW-0963">Cytoplasm</keyword>
<keyword id="KW-0573">Peptidoglycan synthesis</keyword>
<keyword id="KW-0670">Pyruvate</keyword>
<keyword id="KW-0808">Transferase</keyword>
<feature type="chain" id="PRO_1000094703" description="UDP-N-acetylglucosamine 1-carboxyvinyltransferase">
    <location>
        <begin position="1"/>
        <end position="429"/>
    </location>
</feature>
<feature type="active site" description="Proton donor" evidence="1">
    <location>
        <position position="126"/>
    </location>
</feature>
<feature type="binding site" evidence="1">
    <location>
        <begin position="22"/>
        <end position="23"/>
    </location>
    <ligand>
        <name>phosphoenolpyruvate</name>
        <dbReference type="ChEBI" id="CHEBI:58702"/>
    </ligand>
</feature>
<feature type="binding site" evidence="1">
    <location>
        <position position="102"/>
    </location>
    <ligand>
        <name>UDP-N-acetyl-alpha-D-glucosamine</name>
        <dbReference type="ChEBI" id="CHEBI:57705"/>
    </ligand>
</feature>
<feature type="binding site" evidence="1">
    <location>
        <begin position="131"/>
        <end position="135"/>
    </location>
    <ligand>
        <name>UDP-N-acetyl-alpha-D-glucosamine</name>
        <dbReference type="ChEBI" id="CHEBI:57705"/>
    </ligand>
</feature>
<feature type="binding site" evidence="1">
    <location>
        <position position="316"/>
    </location>
    <ligand>
        <name>UDP-N-acetyl-alpha-D-glucosamine</name>
        <dbReference type="ChEBI" id="CHEBI:57705"/>
    </ligand>
</feature>
<feature type="binding site" evidence="1">
    <location>
        <position position="338"/>
    </location>
    <ligand>
        <name>UDP-N-acetyl-alpha-D-glucosamine</name>
        <dbReference type="ChEBI" id="CHEBI:57705"/>
    </ligand>
</feature>
<feature type="modified residue" description="2-(S-cysteinyl)pyruvic acid O-phosphothioketal" evidence="1">
    <location>
        <position position="126"/>
    </location>
</feature>
<sequence length="429" mass="45362">MDRIHITGGAPLQGEIPISGAKNAALPLMIASLLTGETVELANVPRLADIASLLRILGNHGVDHMVVGKRPGQTSETGQTIRLTASNVIDTTAPYELVSTMRASFWVVAPLLARFGEAKVSMPGGCAIGTRPVDLLLMALERLGASIEIDGGYVVARTRNGLRGAEIVFPKVTVGGTHVALMAAALAQGTSVIENAAREPEVVDLAACLTKMGARIEGVGTPRIVVEGVSRLGGARHEVLPDRIETGTYAMAVAMTGGDVILRDTRAELLHSALDVLATTGTEVTALPDGIRVRRNGAGVAAVDVTTDPFPGFPTDLQAQFMALMTRARGQSRIRETIFENRFMHVQELARLGARIRLDGDLAVVDGVERLKGAPVMATDLRASVSLVIAGLAAEGETTINRVYHLDRGFEALEAKLGRCGAQIRRERA</sequence>
<proteinExistence type="inferred from homology"/>
<accession>B0UL80</accession>
<reference key="1">
    <citation type="submission" date="2008-02" db="EMBL/GenBank/DDBJ databases">
        <title>Complete sequence of chromosome of Methylobacterium sp. 4-46.</title>
        <authorList>
            <consortium name="US DOE Joint Genome Institute"/>
            <person name="Copeland A."/>
            <person name="Lucas S."/>
            <person name="Lapidus A."/>
            <person name="Glavina del Rio T."/>
            <person name="Dalin E."/>
            <person name="Tice H."/>
            <person name="Bruce D."/>
            <person name="Goodwin L."/>
            <person name="Pitluck S."/>
            <person name="Chertkov O."/>
            <person name="Brettin T."/>
            <person name="Detter J.C."/>
            <person name="Han C."/>
            <person name="Kuske C.R."/>
            <person name="Schmutz J."/>
            <person name="Larimer F."/>
            <person name="Land M."/>
            <person name="Hauser L."/>
            <person name="Kyrpides N."/>
            <person name="Ivanova N."/>
            <person name="Marx C.J."/>
            <person name="Richardson P."/>
        </authorList>
    </citation>
    <scope>NUCLEOTIDE SEQUENCE [LARGE SCALE GENOMIC DNA]</scope>
    <source>
        <strain>4-46</strain>
    </source>
</reference>